<gene>
    <name evidence="1" type="primary">rpsQ</name>
    <name type="ordered locus">SPO0494</name>
</gene>
<reference key="1">
    <citation type="journal article" date="2004" name="Nature">
        <title>Genome sequence of Silicibacter pomeroyi reveals adaptations to the marine environment.</title>
        <authorList>
            <person name="Moran M.A."/>
            <person name="Buchan A."/>
            <person name="Gonzalez J.M."/>
            <person name="Heidelberg J.F."/>
            <person name="Whitman W.B."/>
            <person name="Kiene R.P."/>
            <person name="Henriksen J.R."/>
            <person name="King G.M."/>
            <person name="Belas R."/>
            <person name="Fuqua C."/>
            <person name="Brinkac L.M."/>
            <person name="Lewis M."/>
            <person name="Johri S."/>
            <person name="Weaver B."/>
            <person name="Pai G."/>
            <person name="Eisen J.A."/>
            <person name="Rahe E."/>
            <person name="Sheldon W.M."/>
            <person name="Ye W."/>
            <person name="Miller T.R."/>
            <person name="Carlton J."/>
            <person name="Rasko D.A."/>
            <person name="Paulsen I.T."/>
            <person name="Ren Q."/>
            <person name="Daugherty S.C."/>
            <person name="DeBoy R.T."/>
            <person name="Dodson R.J."/>
            <person name="Durkin A.S."/>
            <person name="Madupu R."/>
            <person name="Nelson W.C."/>
            <person name="Sullivan S.A."/>
            <person name="Rosovitz M.J."/>
            <person name="Haft D.H."/>
            <person name="Selengut J."/>
            <person name="Ward N."/>
        </authorList>
    </citation>
    <scope>NUCLEOTIDE SEQUENCE [LARGE SCALE GENOMIC DNA]</scope>
    <source>
        <strain>ATCC 700808 / DSM 15171 / DSS-3</strain>
    </source>
</reference>
<reference key="2">
    <citation type="journal article" date="2014" name="Stand. Genomic Sci.">
        <title>An updated genome annotation for the model marine bacterium Ruegeria pomeroyi DSS-3.</title>
        <authorList>
            <person name="Rivers A.R."/>
            <person name="Smith C.B."/>
            <person name="Moran M.A."/>
        </authorList>
    </citation>
    <scope>GENOME REANNOTATION</scope>
    <source>
        <strain>ATCC 700808 / DSM 15171 / DSS-3</strain>
    </source>
</reference>
<accession>Q5LW49</accession>
<feature type="chain" id="PRO_0000233566" description="Small ribosomal subunit protein uS17">
    <location>
        <begin position="1"/>
        <end position="76"/>
    </location>
</feature>
<keyword id="KW-1185">Reference proteome</keyword>
<keyword id="KW-0687">Ribonucleoprotein</keyword>
<keyword id="KW-0689">Ribosomal protein</keyword>
<keyword id="KW-0694">RNA-binding</keyword>
<keyword id="KW-0699">rRNA-binding</keyword>
<proteinExistence type="inferred from homology"/>
<dbReference type="EMBL" id="CP000031">
    <property type="protein sequence ID" value="AAV93811.1"/>
    <property type="molecule type" value="Genomic_DNA"/>
</dbReference>
<dbReference type="RefSeq" id="WP_011046254.1">
    <property type="nucleotide sequence ID" value="NC_003911.12"/>
</dbReference>
<dbReference type="SMR" id="Q5LW49"/>
<dbReference type="STRING" id="246200.SPO0494"/>
<dbReference type="PaxDb" id="246200-SPO0494"/>
<dbReference type="KEGG" id="sil:SPO0494"/>
<dbReference type="eggNOG" id="COG0186">
    <property type="taxonomic scope" value="Bacteria"/>
</dbReference>
<dbReference type="HOGENOM" id="CLU_073626_1_1_5"/>
<dbReference type="OrthoDB" id="9811714at2"/>
<dbReference type="Proteomes" id="UP000001023">
    <property type="component" value="Chromosome"/>
</dbReference>
<dbReference type="GO" id="GO:0022627">
    <property type="term" value="C:cytosolic small ribosomal subunit"/>
    <property type="evidence" value="ECO:0007669"/>
    <property type="project" value="TreeGrafter"/>
</dbReference>
<dbReference type="GO" id="GO:0019843">
    <property type="term" value="F:rRNA binding"/>
    <property type="evidence" value="ECO:0007669"/>
    <property type="project" value="UniProtKB-UniRule"/>
</dbReference>
<dbReference type="GO" id="GO:0003735">
    <property type="term" value="F:structural constituent of ribosome"/>
    <property type="evidence" value="ECO:0007669"/>
    <property type="project" value="InterPro"/>
</dbReference>
<dbReference type="GO" id="GO:0006412">
    <property type="term" value="P:translation"/>
    <property type="evidence" value="ECO:0007669"/>
    <property type="project" value="UniProtKB-UniRule"/>
</dbReference>
<dbReference type="CDD" id="cd00364">
    <property type="entry name" value="Ribosomal_uS17"/>
    <property type="match status" value="1"/>
</dbReference>
<dbReference type="Gene3D" id="2.40.50.140">
    <property type="entry name" value="Nucleic acid-binding proteins"/>
    <property type="match status" value="1"/>
</dbReference>
<dbReference type="HAMAP" id="MF_01345_B">
    <property type="entry name" value="Ribosomal_uS17_B"/>
    <property type="match status" value="1"/>
</dbReference>
<dbReference type="InterPro" id="IPR012340">
    <property type="entry name" value="NA-bd_OB-fold"/>
</dbReference>
<dbReference type="InterPro" id="IPR000266">
    <property type="entry name" value="Ribosomal_uS17"/>
</dbReference>
<dbReference type="InterPro" id="IPR019984">
    <property type="entry name" value="Ribosomal_uS17_bact/chlr"/>
</dbReference>
<dbReference type="NCBIfam" id="NF004123">
    <property type="entry name" value="PRK05610.1"/>
    <property type="match status" value="1"/>
</dbReference>
<dbReference type="NCBIfam" id="TIGR03635">
    <property type="entry name" value="uS17_bact"/>
    <property type="match status" value="1"/>
</dbReference>
<dbReference type="PANTHER" id="PTHR10744">
    <property type="entry name" value="40S RIBOSOMAL PROTEIN S11 FAMILY MEMBER"/>
    <property type="match status" value="1"/>
</dbReference>
<dbReference type="PANTHER" id="PTHR10744:SF1">
    <property type="entry name" value="SMALL RIBOSOMAL SUBUNIT PROTEIN US17M"/>
    <property type="match status" value="1"/>
</dbReference>
<dbReference type="Pfam" id="PF00366">
    <property type="entry name" value="Ribosomal_S17"/>
    <property type="match status" value="1"/>
</dbReference>
<dbReference type="PRINTS" id="PR00973">
    <property type="entry name" value="RIBOSOMALS17"/>
</dbReference>
<dbReference type="SUPFAM" id="SSF50249">
    <property type="entry name" value="Nucleic acid-binding proteins"/>
    <property type="match status" value="1"/>
</dbReference>
<comment type="function">
    <text evidence="1">One of the primary rRNA binding proteins, it binds specifically to the 5'-end of 16S ribosomal RNA.</text>
</comment>
<comment type="subunit">
    <text evidence="1">Part of the 30S ribosomal subunit.</text>
</comment>
<comment type="similarity">
    <text evidence="1">Belongs to the universal ribosomal protein uS17 family.</text>
</comment>
<name>RS17_RUEPO</name>
<evidence type="ECO:0000255" key="1">
    <source>
        <dbReference type="HAMAP-Rule" id="MF_01345"/>
    </source>
</evidence>
<evidence type="ECO:0000305" key="2"/>
<sequence length="76" mass="8749">MPKRILQGTVTSDANAQTVTVLVERRFTHPVLKKTIRKSKKYRAHDEKNAFKVGDTVRIIECAPKSKTKRWEVLEA</sequence>
<organism>
    <name type="scientific">Ruegeria pomeroyi (strain ATCC 700808 / DSM 15171 / DSS-3)</name>
    <name type="common">Silicibacter pomeroyi</name>
    <dbReference type="NCBI Taxonomy" id="246200"/>
    <lineage>
        <taxon>Bacteria</taxon>
        <taxon>Pseudomonadati</taxon>
        <taxon>Pseudomonadota</taxon>
        <taxon>Alphaproteobacteria</taxon>
        <taxon>Rhodobacterales</taxon>
        <taxon>Roseobacteraceae</taxon>
        <taxon>Ruegeria</taxon>
    </lineage>
</organism>
<protein>
    <recommendedName>
        <fullName evidence="1">Small ribosomal subunit protein uS17</fullName>
    </recommendedName>
    <alternativeName>
        <fullName evidence="2">30S ribosomal protein S17</fullName>
    </alternativeName>
</protein>